<evidence type="ECO:0000255" key="1">
    <source>
        <dbReference type="HAMAP-Rule" id="MF_01077"/>
    </source>
</evidence>
<evidence type="ECO:0000256" key="2">
    <source>
        <dbReference type="SAM" id="MobiDB-lite"/>
    </source>
</evidence>
<name>RIMP_BRADU</name>
<protein>
    <recommendedName>
        <fullName evidence="1">Ribosome maturation factor RimP</fullName>
    </recommendedName>
</protein>
<keyword id="KW-0963">Cytoplasm</keyword>
<keyword id="KW-1185">Reference proteome</keyword>
<keyword id="KW-0690">Ribosome biogenesis</keyword>
<gene>
    <name evidence="1" type="primary">rimP</name>
    <name type="ordered locus">bll0786</name>
</gene>
<proteinExistence type="inferred from homology"/>
<organism>
    <name type="scientific">Bradyrhizobium diazoefficiens (strain JCM 10833 / BCRC 13528 / IAM 13628 / NBRC 14792 / USDA 110)</name>
    <dbReference type="NCBI Taxonomy" id="224911"/>
    <lineage>
        <taxon>Bacteria</taxon>
        <taxon>Pseudomonadati</taxon>
        <taxon>Pseudomonadota</taxon>
        <taxon>Alphaproteobacteria</taxon>
        <taxon>Hyphomicrobiales</taxon>
        <taxon>Nitrobacteraceae</taxon>
        <taxon>Bradyrhizobium</taxon>
    </lineage>
</organism>
<feature type="chain" id="PRO_0000181853" description="Ribosome maturation factor RimP">
    <location>
        <begin position="1"/>
        <end position="251"/>
    </location>
</feature>
<feature type="region of interest" description="Disordered" evidence="2">
    <location>
        <begin position="198"/>
        <end position="251"/>
    </location>
</feature>
<feature type="compositionally biased region" description="Basic residues" evidence="2">
    <location>
        <begin position="217"/>
        <end position="234"/>
    </location>
</feature>
<feature type="compositionally biased region" description="Basic and acidic residues" evidence="2">
    <location>
        <begin position="235"/>
        <end position="245"/>
    </location>
</feature>
<dbReference type="EMBL" id="BA000040">
    <property type="protein sequence ID" value="BAC46051.1"/>
    <property type="molecule type" value="Genomic_DNA"/>
</dbReference>
<dbReference type="RefSeq" id="NP_767426.1">
    <property type="nucleotide sequence ID" value="NC_004463.1"/>
</dbReference>
<dbReference type="RefSeq" id="WP_011083608.1">
    <property type="nucleotide sequence ID" value="NC_004463.1"/>
</dbReference>
<dbReference type="SMR" id="Q89WA6"/>
<dbReference type="FunCoup" id="Q89WA6">
    <property type="interactions" value="389"/>
</dbReference>
<dbReference type="STRING" id="224911.AAV28_00780"/>
<dbReference type="EnsemblBacteria" id="BAC46051">
    <property type="protein sequence ID" value="BAC46051"/>
    <property type="gene ID" value="BAC46051"/>
</dbReference>
<dbReference type="GeneID" id="46488062"/>
<dbReference type="KEGG" id="bja:bll0786"/>
<dbReference type="PATRIC" id="fig|224911.44.peg.161"/>
<dbReference type="eggNOG" id="COG0779">
    <property type="taxonomic scope" value="Bacteria"/>
</dbReference>
<dbReference type="HOGENOM" id="CLU_070525_0_0_5"/>
<dbReference type="InParanoid" id="Q89WA6"/>
<dbReference type="OrthoDB" id="9805006at2"/>
<dbReference type="PhylomeDB" id="Q89WA6"/>
<dbReference type="Proteomes" id="UP000002526">
    <property type="component" value="Chromosome"/>
</dbReference>
<dbReference type="GO" id="GO:0005829">
    <property type="term" value="C:cytosol"/>
    <property type="evidence" value="ECO:0000318"/>
    <property type="project" value="GO_Central"/>
</dbReference>
<dbReference type="GO" id="GO:0000028">
    <property type="term" value="P:ribosomal small subunit assembly"/>
    <property type="evidence" value="ECO:0000318"/>
    <property type="project" value="GO_Central"/>
</dbReference>
<dbReference type="GO" id="GO:0006412">
    <property type="term" value="P:translation"/>
    <property type="evidence" value="ECO:0000318"/>
    <property type="project" value="GO_Central"/>
</dbReference>
<dbReference type="CDD" id="cd01734">
    <property type="entry name" value="YlxS_C"/>
    <property type="match status" value="1"/>
</dbReference>
<dbReference type="Gene3D" id="2.30.30.180">
    <property type="entry name" value="Ribosome maturation factor RimP, C-terminal domain"/>
    <property type="match status" value="1"/>
</dbReference>
<dbReference type="Gene3D" id="3.30.300.70">
    <property type="entry name" value="RimP-like superfamily, N-terminal"/>
    <property type="match status" value="1"/>
</dbReference>
<dbReference type="HAMAP" id="MF_01077">
    <property type="entry name" value="RimP"/>
    <property type="match status" value="1"/>
</dbReference>
<dbReference type="InterPro" id="IPR003728">
    <property type="entry name" value="Ribosome_maturation_RimP"/>
</dbReference>
<dbReference type="InterPro" id="IPR028998">
    <property type="entry name" value="RimP_C"/>
</dbReference>
<dbReference type="InterPro" id="IPR036847">
    <property type="entry name" value="RimP_C_sf"/>
</dbReference>
<dbReference type="InterPro" id="IPR028989">
    <property type="entry name" value="RimP_N"/>
</dbReference>
<dbReference type="InterPro" id="IPR035956">
    <property type="entry name" value="RimP_N_sf"/>
</dbReference>
<dbReference type="NCBIfam" id="NF000932">
    <property type="entry name" value="PRK00092.2-5"/>
    <property type="match status" value="1"/>
</dbReference>
<dbReference type="NCBIfam" id="NF000933">
    <property type="entry name" value="PRK00092.2-6"/>
    <property type="match status" value="1"/>
</dbReference>
<dbReference type="PANTHER" id="PTHR33867">
    <property type="entry name" value="RIBOSOME MATURATION FACTOR RIMP"/>
    <property type="match status" value="1"/>
</dbReference>
<dbReference type="PANTHER" id="PTHR33867:SF1">
    <property type="entry name" value="RIBOSOME MATURATION FACTOR RIMP"/>
    <property type="match status" value="1"/>
</dbReference>
<dbReference type="Pfam" id="PF17384">
    <property type="entry name" value="DUF150_C"/>
    <property type="match status" value="1"/>
</dbReference>
<dbReference type="Pfam" id="PF02576">
    <property type="entry name" value="RimP_N"/>
    <property type="match status" value="1"/>
</dbReference>
<dbReference type="SUPFAM" id="SSF74942">
    <property type="entry name" value="YhbC-like, C-terminal domain"/>
    <property type="match status" value="1"/>
</dbReference>
<dbReference type="SUPFAM" id="SSF75420">
    <property type="entry name" value="YhbC-like, N-terminal domain"/>
    <property type="match status" value="1"/>
</dbReference>
<accession>Q89WA6</accession>
<comment type="function">
    <text evidence="1">Required for maturation of 30S ribosomal subunits.</text>
</comment>
<comment type="subcellular location">
    <subcellularLocation>
        <location evidence="1">Cytoplasm</location>
    </subcellularLocation>
</comment>
<comment type="similarity">
    <text evidence="1">Belongs to the RimP family.</text>
</comment>
<reference key="1">
    <citation type="journal article" date="2002" name="DNA Res.">
        <title>Complete genomic sequence of nitrogen-fixing symbiotic bacterium Bradyrhizobium japonicum USDA110.</title>
        <authorList>
            <person name="Kaneko T."/>
            <person name="Nakamura Y."/>
            <person name="Sato S."/>
            <person name="Minamisawa K."/>
            <person name="Uchiumi T."/>
            <person name="Sasamoto S."/>
            <person name="Watanabe A."/>
            <person name="Idesawa K."/>
            <person name="Iriguchi M."/>
            <person name="Kawashima K."/>
            <person name="Kohara M."/>
            <person name="Matsumoto M."/>
            <person name="Shimpo S."/>
            <person name="Tsuruoka H."/>
            <person name="Wada T."/>
            <person name="Yamada M."/>
            <person name="Tabata S."/>
        </authorList>
    </citation>
    <scope>NUCLEOTIDE SEQUENCE [LARGE SCALE GENOMIC DNA]</scope>
    <source>
        <strain>JCM 10833 / BCRC 13528 / IAM 13628 / NBRC 14792 / USDA 110</strain>
    </source>
</reference>
<sequence>MTEPTVGSTDAELLAEPRLVVEPGVAARVSAVAGPVLQGMGYRLVRIRISGEAGCTVQIMAERPDGSMQIEDCEAISRALSPVLDVADPIDRAYRLEISSPGIDRPLVRRSDFERYAGHLVKVEMAVAHEGRKRFRGMIGAVEGDRVHLQRDDVKAGEERNVLLTMEDISEARLVLTDELIAESMRRGKAAAREMRRNLGLEPPAAPHAKISEKTTKNTKPKKKPAPTNTKKHRLAAERARRGEIEPDEGD</sequence>